<comment type="function">
    <text evidence="1">One of the primary rRNA binding proteins, it binds directly to 16S rRNA central domain where it helps coordinate assembly of the platform of the 30S subunit.</text>
</comment>
<comment type="subunit">
    <text evidence="1">Part of the 30S ribosomal subunit. Contacts proteins S5 and S12.</text>
</comment>
<comment type="similarity">
    <text evidence="1">Belongs to the universal ribosomal protein uS8 family.</text>
</comment>
<keyword id="KW-1185">Reference proteome</keyword>
<keyword id="KW-0687">Ribonucleoprotein</keyword>
<keyword id="KW-0689">Ribosomal protein</keyword>
<keyword id="KW-0694">RNA-binding</keyword>
<keyword id="KW-0699">rRNA-binding</keyword>
<feature type="chain" id="PRO_0000290897" description="Small ribosomal subunit protein uS8">
    <location>
        <begin position="1"/>
        <end position="131"/>
    </location>
</feature>
<name>RS8_POLSJ</name>
<protein>
    <recommendedName>
        <fullName evidence="1">Small ribosomal subunit protein uS8</fullName>
    </recommendedName>
    <alternativeName>
        <fullName evidence="2">30S ribosomal protein S8</fullName>
    </alternativeName>
</protein>
<reference key="1">
    <citation type="journal article" date="2008" name="Appl. Environ. Microbiol.">
        <title>The genome of Polaromonas sp. strain JS666: insights into the evolution of a hydrocarbon- and xenobiotic-degrading bacterium, and features of relevance to biotechnology.</title>
        <authorList>
            <person name="Mattes T.E."/>
            <person name="Alexander A.K."/>
            <person name="Richardson P.M."/>
            <person name="Munk A.C."/>
            <person name="Han C.S."/>
            <person name="Stothard P."/>
            <person name="Coleman N.V."/>
        </authorList>
    </citation>
    <scope>NUCLEOTIDE SEQUENCE [LARGE SCALE GENOMIC DNA]</scope>
    <source>
        <strain>JS666 / ATCC BAA-500</strain>
    </source>
</reference>
<gene>
    <name evidence="1" type="primary">rpsH</name>
    <name type="ordered locus">Bpro_0489</name>
</gene>
<proteinExistence type="inferred from homology"/>
<evidence type="ECO:0000255" key="1">
    <source>
        <dbReference type="HAMAP-Rule" id="MF_01302"/>
    </source>
</evidence>
<evidence type="ECO:0000305" key="2"/>
<dbReference type="EMBL" id="CP000316">
    <property type="protein sequence ID" value="ABE42453.1"/>
    <property type="molecule type" value="Genomic_DNA"/>
</dbReference>
<dbReference type="RefSeq" id="WP_011481459.1">
    <property type="nucleotide sequence ID" value="NC_007948.1"/>
</dbReference>
<dbReference type="SMR" id="Q12G89"/>
<dbReference type="STRING" id="296591.Bpro_0489"/>
<dbReference type="KEGG" id="pol:Bpro_0489"/>
<dbReference type="eggNOG" id="COG0096">
    <property type="taxonomic scope" value="Bacteria"/>
</dbReference>
<dbReference type="HOGENOM" id="CLU_098428_0_0_4"/>
<dbReference type="OrthoDB" id="9802617at2"/>
<dbReference type="Proteomes" id="UP000001983">
    <property type="component" value="Chromosome"/>
</dbReference>
<dbReference type="GO" id="GO:1990904">
    <property type="term" value="C:ribonucleoprotein complex"/>
    <property type="evidence" value="ECO:0007669"/>
    <property type="project" value="UniProtKB-KW"/>
</dbReference>
<dbReference type="GO" id="GO:0005840">
    <property type="term" value="C:ribosome"/>
    <property type="evidence" value="ECO:0007669"/>
    <property type="project" value="UniProtKB-KW"/>
</dbReference>
<dbReference type="GO" id="GO:0019843">
    <property type="term" value="F:rRNA binding"/>
    <property type="evidence" value="ECO:0007669"/>
    <property type="project" value="UniProtKB-UniRule"/>
</dbReference>
<dbReference type="GO" id="GO:0003735">
    <property type="term" value="F:structural constituent of ribosome"/>
    <property type="evidence" value="ECO:0007669"/>
    <property type="project" value="InterPro"/>
</dbReference>
<dbReference type="GO" id="GO:0006412">
    <property type="term" value="P:translation"/>
    <property type="evidence" value="ECO:0007669"/>
    <property type="project" value="UniProtKB-UniRule"/>
</dbReference>
<dbReference type="FunFam" id="3.30.1370.30:FF:000002">
    <property type="entry name" value="30S ribosomal protein S8"/>
    <property type="match status" value="1"/>
</dbReference>
<dbReference type="FunFam" id="3.30.1490.10:FF:000001">
    <property type="entry name" value="30S ribosomal protein S8"/>
    <property type="match status" value="1"/>
</dbReference>
<dbReference type="Gene3D" id="3.30.1370.30">
    <property type="match status" value="1"/>
</dbReference>
<dbReference type="Gene3D" id="3.30.1490.10">
    <property type="match status" value="1"/>
</dbReference>
<dbReference type="HAMAP" id="MF_01302_B">
    <property type="entry name" value="Ribosomal_uS8_B"/>
    <property type="match status" value="1"/>
</dbReference>
<dbReference type="InterPro" id="IPR000630">
    <property type="entry name" value="Ribosomal_uS8"/>
</dbReference>
<dbReference type="InterPro" id="IPR047863">
    <property type="entry name" value="Ribosomal_uS8_CS"/>
</dbReference>
<dbReference type="InterPro" id="IPR035987">
    <property type="entry name" value="Ribosomal_uS8_sf"/>
</dbReference>
<dbReference type="NCBIfam" id="NF001109">
    <property type="entry name" value="PRK00136.1"/>
    <property type="match status" value="1"/>
</dbReference>
<dbReference type="PANTHER" id="PTHR11758">
    <property type="entry name" value="40S RIBOSOMAL PROTEIN S15A"/>
    <property type="match status" value="1"/>
</dbReference>
<dbReference type="Pfam" id="PF00410">
    <property type="entry name" value="Ribosomal_S8"/>
    <property type="match status" value="1"/>
</dbReference>
<dbReference type="SUPFAM" id="SSF56047">
    <property type="entry name" value="Ribosomal protein S8"/>
    <property type="match status" value="1"/>
</dbReference>
<dbReference type="PROSITE" id="PS00053">
    <property type="entry name" value="RIBOSOMAL_S8"/>
    <property type="match status" value="1"/>
</dbReference>
<organism>
    <name type="scientific">Polaromonas sp. (strain JS666 / ATCC BAA-500)</name>
    <dbReference type="NCBI Taxonomy" id="296591"/>
    <lineage>
        <taxon>Bacteria</taxon>
        <taxon>Pseudomonadati</taxon>
        <taxon>Pseudomonadota</taxon>
        <taxon>Betaproteobacteria</taxon>
        <taxon>Burkholderiales</taxon>
        <taxon>Comamonadaceae</taxon>
        <taxon>Polaromonas</taxon>
    </lineage>
</organism>
<sequence>MSMSDPIADMLTRIRNAQMVEKAVVLVPSSKVKVAIAQVLKDEGYIDGFSVKTDDGKSQLEIALKYYAGRPVIERIERVSRPGLRVYKGHGAIPQVMNGLGVAIVTTPQGVMTDRKARATGIGGEVLCYVA</sequence>
<accession>Q12G89</accession>